<organism>
    <name type="scientific">Staphylococcus aureus (strain USA300)</name>
    <dbReference type="NCBI Taxonomy" id="367830"/>
    <lineage>
        <taxon>Bacteria</taxon>
        <taxon>Bacillati</taxon>
        <taxon>Bacillota</taxon>
        <taxon>Bacilli</taxon>
        <taxon>Bacillales</taxon>
        <taxon>Staphylococcaceae</taxon>
        <taxon>Staphylococcus</taxon>
    </lineage>
</organism>
<evidence type="ECO:0000255" key="1">
    <source>
        <dbReference type="PROSITE-ProRule" id="PRU00335"/>
    </source>
</evidence>
<sequence>MRKDAKENRQRIEEIAHKLFDEEGVENISMNRIAKELGIGMGTLYRHFKDKSDLCYYVIQRDLDIFITHFKQIKDDYHSNYEVMQVSLDYLLQFKIDNKALLQCIEAGNNKLRFYQSAFYQELFDFYYDLFKSDDDTYTKFKTDMLLQSLSTSVFAFQIEHRHISIEAYRNYLLNIYLDEVGRND</sequence>
<protein>
    <recommendedName>
        <fullName>HTH-type transcriptional regulator SAUSA300_2515</fullName>
    </recommendedName>
</protein>
<name>Y2515_STAA3</name>
<proteinExistence type="predicted"/>
<accession>Q2FDS9</accession>
<feature type="chain" id="PRO_0000286697" description="HTH-type transcriptional regulator SAUSA300_2515">
    <location>
        <begin position="1"/>
        <end position="185"/>
    </location>
</feature>
<feature type="domain" description="HTH tetR-type" evidence="1">
    <location>
        <begin position="6"/>
        <end position="66"/>
    </location>
</feature>
<feature type="DNA-binding region" description="H-T-H motif" evidence="1">
    <location>
        <begin position="29"/>
        <end position="48"/>
    </location>
</feature>
<reference key="1">
    <citation type="journal article" date="2006" name="Lancet">
        <title>Complete genome sequence of USA300, an epidemic clone of community-acquired meticillin-resistant Staphylococcus aureus.</title>
        <authorList>
            <person name="Diep B.A."/>
            <person name="Gill S.R."/>
            <person name="Chang R.F."/>
            <person name="Phan T.H."/>
            <person name="Chen J.H."/>
            <person name="Davidson M.G."/>
            <person name="Lin F."/>
            <person name="Lin J."/>
            <person name="Carleton H.A."/>
            <person name="Mongodin E.F."/>
            <person name="Sensabaugh G.F."/>
            <person name="Perdreau-Remington F."/>
        </authorList>
    </citation>
    <scope>NUCLEOTIDE SEQUENCE [LARGE SCALE GENOMIC DNA]</scope>
    <source>
        <strain>USA300</strain>
    </source>
</reference>
<dbReference type="EMBL" id="CP000255">
    <property type="protein sequence ID" value="ABD22634.1"/>
    <property type="molecule type" value="Genomic_DNA"/>
</dbReference>
<dbReference type="RefSeq" id="WP_001224188.1">
    <property type="nucleotide sequence ID" value="NZ_CP027476.1"/>
</dbReference>
<dbReference type="SMR" id="Q2FDS9"/>
<dbReference type="KEGG" id="saa:SAUSA300_2515"/>
<dbReference type="HOGENOM" id="CLU_069356_17_2_9"/>
<dbReference type="OMA" id="HCIEAGN"/>
<dbReference type="Proteomes" id="UP000001939">
    <property type="component" value="Chromosome"/>
</dbReference>
<dbReference type="GO" id="GO:0003677">
    <property type="term" value="F:DNA binding"/>
    <property type="evidence" value="ECO:0007669"/>
    <property type="project" value="UniProtKB-KW"/>
</dbReference>
<dbReference type="Gene3D" id="1.10.357.10">
    <property type="entry name" value="Tetracycline Repressor, domain 2"/>
    <property type="match status" value="1"/>
</dbReference>
<dbReference type="InterPro" id="IPR023772">
    <property type="entry name" value="DNA-bd_HTH_TetR-type_CS"/>
</dbReference>
<dbReference type="InterPro" id="IPR009057">
    <property type="entry name" value="Homeodomain-like_sf"/>
</dbReference>
<dbReference type="InterPro" id="IPR050624">
    <property type="entry name" value="HTH-type_Tx_Regulator"/>
</dbReference>
<dbReference type="InterPro" id="IPR001647">
    <property type="entry name" value="HTH_TetR"/>
</dbReference>
<dbReference type="PANTHER" id="PTHR43479">
    <property type="entry name" value="ACREF/ENVCD OPERON REPRESSOR-RELATED"/>
    <property type="match status" value="1"/>
</dbReference>
<dbReference type="PANTHER" id="PTHR43479:SF11">
    <property type="entry name" value="ACREF_ENVCD OPERON REPRESSOR-RELATED"/>
    <property type="match status" value="1"/>
</dbReference>
<dbReference type="Pfam" id="PF00440">
    <property type="entry name" value="TetR_N"/>
    <property type="match status" value="1"/>
</dbReference>
<dbReference type="PRINTS" id="PR00455">
    <property type="entry name" value="HTHTETR"/>
</dbReference>
<dbReference type="SUPFAM" id="SSF46689">
    <property type="entry name" value="Homeodomain-like"/>
    <property type="match status" value="1"/>
</dbReference>
<dbReference type="PROSITE" id="PS01081">
    <property type="entry name" value="HTH_TETR_1"/>
    <property type="match status" value="1"/>
</dbReference>
<dbReference type="PROSITE" id="PS50977">
    <property type="entry name" value="HTH_TETR_2"/>
    <property type="match status" value="1"/>
</dbReference>
<keyword id="KW-0238">DNA-binding</keyword>
<keyword id="KW-0804">Transcription</keyword>
<keyword id="KW-0805">Transcription regulation</keyword>
<gene>
    <name type="ordered locus">SAUSA300_2515</name>
</gene>